<reference key="1">
    <citation type="journal article" date="2007" name="PLoS Genet.">
        <title>Genome analysis of Minibacterium massiliensis highlights the convergent evolution of water-living bacteria.</title>
        <authorList>
            <person name="Audic S."/>
            <person name="Robert C."/>
            <person name="Campagna B."/>
            <person name="Parinello H."/>
            <person name="Claverie J.-M."/>
            <person name="Raoult D."/>
            <person name="Drancourt M."/>
        </authorList>
    </citation>
    <scope>NUCLEOTIDE SEQUENCE [LARGE SCALE GENOMIC DNA]</scope>
    <source>
        <strain>Marseille</strain>
    </source>
</reference>
<name>UREG_JANMA</name>
<dbReference type="EMBL" id="CP000269">
    <property type="protein sequence ID" value="ABR89522.1"/>
    <property type="molecule type" value="Genomic_DNA"/>
</dbReference>
<dbReference type="RefSeq" id="WP_012079670.1">
    <property type="nucleotide sequence ID" value="NC_009659.1"/>
</dbReference>
<dbReference type="SMR" id="A6SZ10"/>
<dbReference type="STRING" id="375286.mma_1817"/>
<dbReference type="KEGG" id="mms:mma_1817"/>
<dbReference type="eggNOG" id="COG0378">
    <property type="taxonomic scope" value="Bacteria"/>
</dbReference>
<dbReference type="HOGENOM" id="CLU_072144_1_0_4"/>
<dbReference type="OrthoDB" id="9802035at2"/>
<dbReference type="Proteomes" id="UP000006388">
    <property type="component" value="Chromosome"/>
</dbReference>
<dbReference type="GO" id="GO:0005737">
    <property type="term" value="C:cytoplasm"/>
    <property type="evidence" value="ECO:0007669"/>
    <property type="project" value="UniProtKB-SubCell"/>
</dbReference>
<dbReference type="GO" id="GO:0005525">
    <property type="term" value="F:GTP binding"/>
    <property type="evidence" value="ECO:0007669"/>
    <property type="project" value="UniProtKB-KW"/>
</dbReference>
<dbReference type="GO" id="GO:0003924">
    <property type="term" value="F:GTPase activity"/>
    <property type="evidence" value="ECO:0007669"/>
    <property type="project" value="InterPro"/>
</dbReference>
<dbReference type="GO" id="GO:0016151">
    <property type="term" value="F:nickel cation binding"/>
    <property type="evidence" value="ECO:0007669"/>
    <property type="project" value="UniProtKB-UniRule"/>
</dbReference>
<dbReference type="GO" id="GO:0043419">
    <property type="term" value="P:urea catabolic process"/>
    <property type="evidence" value="ECO:0007669"/>
    <property type="project" value="InterPro"/>
</dbReference>
<dbReference type="CDD" id="cd05540">
    <property type="entry name" value="UreG"/>
    <property type="match status" value="1"/>
</dbReference>
<dbReference type="FunFam" id="3.40.50.300:FF:000208">
    <property type="entry name" value="Urease accessory protein UreG"/>
    <property type="match status" value="1"/>
</dbReference>
<dbReference type="Gene3D" id="3.40.50.300">
    <property type="entry name" value="P-loop containing nucleotide triphosphate hydrolases"/>
    <property type="match status" value="1"/>
</dbReference>
<dbReference type="HAMAP" id="MF_01389">
    <property type="entry name" value="UreG"/>
    <property type="match status" value="1"/>
</dbReference>
<dbReference type="InterPro" id="IPR003495">
    <property type="entry name" value="CobW/HypB/UreG_nucleotide-bd"/>
</dbReference>
<dbReference type="InterPro" id="IPR027417">
    <property type="entry name" value="P-loop_NTPase"/>
</dbReference>
<dbReference type="InterPro" id="IPR004400">
    <property type="entry name" value="UreG"/>
</dbReference>
<dbReference type="NCBIfam" id="TIGR00101">
    <property type="entry name" value="ureG"/>
    <property type="match status" value="1"/>
</dbReference>
<dbReference type="PANTHER" id="PTHR31715">
    <property type="entry name" value="UREASE ACCESSORY PROTEIN G"/>
    <property type="match status" value="1"/>
</dbReference>
<dbReference type="PANTHER" id="PTHR31715:SF0">
    <property type="entry name" value="UREASE ACCESSORY PROTEIN G"/>
    <property type="match status" value="1"/>
</dbReference>
<dbReference type="Pfam" id="PF02492">
    <property type="entry name" value="cobW"/>
    <property type="match status" value="1"/>
</dbReference>
<dbReference type="PIRSF" id="PIRSF005624">
    <property type="entry name" value="Ni-bind_GTPase"/>
    <property type="match status" value="1"/>
</dbReference>
<dbReference type="SUPFAM" id="SSF52540">
    <property type="entry name" value="P-loop containing nucleoside triphosphate hydrolases"/>
    <property type="match status" value="1"/>
</dbReference>
<evidence type="ECO:0000255" key="1">
    <source>
        <dbReference type="HAMAP-Rule" id="MF_01389"/>
    </source>
</evidence>
<feature type="chain" id="PRO_0000347396" description="Urease accessory protein UreG">
    <location>
        <begin position="1"/>
        <end position="211"/>
    </location>
</feature>
<feature type="binding site" evidence="1">
    <location>
        <begin position="16"/>
        <end position="23"/>
    </location>
    <ligand>
        <name>GTP</name>
        <dbReference type="ChEBI" id="CHEBI:37565"/>
    </ligand>
</feature>
<protein>
    <recommendedName>
        <fullName evidence="1">Urease accessory protein UreG</fullName>
    </recommendedName>
</protein>
<organism>
    <name type="scientific">Janthinobacterium sp. (strain Marseille)</name>
    <name type="common">Minibacterium massiliensis</name>
    <dbReference type="NCBI Taxonomy" id="375286"/>
    <lineage>
        <taxon>Bacteria</taxon>
        <taxon>Pseudomonadati</taxon>
        <taxon>Pseudomonadota</taxon>
        <taxon>Betaproteobacteria</taxon>
        <taxon>Burkholderiales</taxon>
        <taxon>Oxalobacteraceae</taxon>
        <taxon>Janthinobacterium</taxon>
    </lineage>
</organism>
<gene>
    <name evidence="1" type="primary">ureG</name>
    <name type="ordered locus">mma_1817</name>
</gene>
<accession>A6SZ10</accession>
<comment type="function">
    <text evidence="1">Facilitates the functional incorporation of the urease nickel metallocenter. This process requires GTP hydrolysis, probably effectuated by UreG.</text>
</comment>
<comment type="subunit">
    <text evidence="1">Homodimer. UreD, UreF and UreG form a complex that acts as a GTP-hydrolysis-dependent molecular chaperone, activating the urease apoprotein by helping to assemble the nickel containing metallocenter of UreC. The UreE protein probably delivers the nickel.</text>
</comment>
<comment type="subcellular location">
    <subcellularLocation>
        <location evidence="1">Cytoplasm</location>
    </subcellularLocation>
</comment>
<comment type="similarity">
    <text evidence="1">Belongs to the SIMIBI class G3E GTPase family. UreG subfamily.</text>
</comment>
<proteinExistence type="inferred from homology"/>
<keyword id="KW-0143">Chaperone</keyword>
<keyword id="KW-0963">Cytoplasm</keyword>
<keyword id="KW-0342">GTP-binding</keyword>
<keyword id="KW-0996">Nickel insertion</keyword>
<keyword id="KW-0547">Nucleotide-binding</keyword>
<sequence length="211" mass="22926">MSNPSSPNPLRVGIGGPVGSGKTALCEMLCKRMRDNYDMAVITNDIYTKEDMEILLRADALPAERLMGVETGGCPHTAIREDASINLEAIARMSADFPDLDLILVESGGDNLAATFSPELSDLTIYVIDVAGGEKIPRKGGPGITRSDLLIINKTDLAPYVGANLDIMAQDAKRMRGERPFVFTNLRSGDGVETVIEYIRKQGLLDEKRKN</sequence>